<protein>
    <recommendedName>
        <fullName evidence="1">CTP synthase</fullName>
        <ecNumber evidence="1">6.3.4.2</ecNumber>
    </recommendedName>
    <alternativeName>
        <fullName evidence="1">Cytidine 5'-triphosphate synthase</fullName>
    </alternativeName>
    <alternativeName>
        <fullName evidence="1">Cytidine triphosphate synthetase</fullName>
        <shortName evidence="1">CTP synthetase</shortName>
        <shortName evidence="1">CTPS</shortName>
    </alternativeName>
    <alternativeName>
        <fullName evidence="1">UTP--ammonia ligase</fullName>
    </alternativeName>
</protein>
<evidence type="ECO:0000255" key="1">
    <source>
        <dbReference type="HAMAP-Rule" id="MF_01227"/>
    </source>
</evidence>
<sequence length="533" mass="59586">MKKNLKILVITGGVISGIGKGVTSASIARLFRYDFRVTPIKCDGYLNTDPGTINPVEHGEVFVLDDGGEVDMDFGHYERFLNLNAKSSWNITMGKIYKKILENERKGKYLGRTVQLIPHVTDEIKSTIFQIASSENSEMLIIEIGGTVGDMENILFIETVRQIRHEVGSGNIAFIHLTYVPSPVGINEQKSKPTQQSVKTLNKAGIFPDLIIARSSQVLTDQIRKKIAMFCNVESTSIIDNIDVSTIYEIPISFYKQGVHEILSSKLNIKVDPKIEELSRLVGIIKSNFFVPKKIINIAICGKYAELDDSYASIRESLVHVAANLDLLIKSTLIDSNDLNESCLKDFDGIIVPGGFGGKGYEGKIIAIKYARENNIPFLGICLGLQLAVIEFARNVCGILDADTEENLIKDKPLKNPVIHLLPEQKEIKDKGATMRLGGYPVILKKNTIAFKLYGQDRIIERFRHRYEVNNDYIDLFEKNGLIVSGFSSDFKIAKLIEIPKNKFFVACQFHPELITRIENPAKLFLGLIKACI</sequence>
<proteinExistence type="inferred from homology"/>
<keyword id="KW-0067">ATP-binding</keyword>
<keyword id="KW-0315">Glutamine amidotransferase</keyword>
<keyword id="KW-0436">Ligase</keyword>
<keyword id="KW-0460">Magnesium</keyword>
<keyword id="KW-0479">Metal-binding</keyword>
<keyword id="KW-0547">Nucleotide-binding</keyword>
<keyword id="KW-0665">Pyrimidine biosynthesis</keyword>
<accession>Q0SMT3</accession>
<accession>G0IQC5</accession>
<comment type="function">
    <text evidence="1">Catalyzes the ATP-dependent amination of UTP to CTP with either L-glutamine or ammonia as the source of nitrogen. Regulates intracellular CTP levels through interactions with the four ribonucleotide triphosphates.</text>
</comment>
<comment type="catalytic activity">
    <reaction evidence="1">
        <text>UTP + L-glutamine + ATP + H2O = CTP + L-glutamate + ADP + phosphate + 2 H(+)</text>
        <dbReference type="Rhea" id="RHEA:26426"/>
        <dbReference type="ChEBI" id="CHEBI:15377"/>
        <dbReference type="ChEBI" id="CHEBI:15378"/>
        <dbReference type="ChEBI" id="CHEBI:29985"/>
        <dbReference type="ChEBI" id="CHEBI:30616"/>
        <dbReference type="ChEBI" id="CHEBI:37563"/>
        <dbReference type="ChEBI" id="CHEBI:43474"/>
        <dbReference type="ChEBI" id="CHEBI:46398"/>
        <dbReference type="ChEBI" id="CHEBI:58359"/>
        <dbReference type="ChEBI" id="CHEBI:456216"/>
        <dbReference type="EC" id="6.3.4.2"/>
    </reaction>
</comment>
<comment type="catalytic activity">
    <reaction evidence="1">
        <text>L-glutamine + H2O = L-glutamate + NH4(+)</text>
        <dbReference type="Rhea" id="RHEA:15889"/>
        <dbReference type="ChEBI" id="CHEBI:15377"/>
        <dbReference type="ChEBI" id="CHEBI:28938"/>
        <dbReference type="ChEBI" id="CHEBI:29985"/>
        <dbReference type="ChEBI" id="CHEBI:58359"/>
    </reaction>
</comment>
<comment type="catalytic activity">
    <reaction evidence="1">
        <text>UTP + NH4(+) + ATP = CTP + ADP + phosphate + 2 H(+)</text>
        <dbReference type="Rhea" id="RHEA:16597"/>
        <dbReference type="ChEBI" id="CHEBI:15378"/>
        <dbReference type="ChEBI" id="CHEBI:28938"/>
        <dbReference type="ChEBI" id="CHEBI:30616"/>
        <dbReference type="ChEBI" id="CHEBI:37563"/>
        <dbReference type="ChEBI" id="CHEBI:43474"/>
        <dbReference type="ChEBI" id="CHEBI:46398"/>
        <dbReference type="ChEBI" id="CHEBI:456216"/>
    </reaction>
</comment>
<comment type="activity regulation">
    <text evidence="1">Allosterically activated by GTP, when glutamine is the substrate; GTP has no effect on the reaction when ammonia is the substrate. The allosteric effector GTP functions by stabilizing the protein conformation that binds the tetrahedral intermediate(s) formed during glutamine hydrolysis. Inhibited by the product CTP, via allosteric rather than competitive inhibition.</text>
</comment>
<comment type="pathway">
    <text evidence="1">Pyrimidine metabolism; CTP biosynthesis via de novo pathway; CTP from UDP: step 2/2.</text>
</comment>
<comment type="subunit">
    <text evidence="1">Homotetramer.</text>
</comment>
<comment type="miscellaneous">
    <text evidence="1">CTPSs have evolved a hybrid strategy for distinguishing between UTP and CTP. The overlapping regions of the product feedback inhibitory and substrate sites recognize a common feature in both compounds, the triphosphate moiety. To differentiate isosteric substrate and product pyrimidine rings, an additional pocket far from the expected kinase/ligase catalytic site, specifically recognizes the cytosine and ribose portions of the product inhibitor.</text>
</comment>
<comment type="similarity">
    <text evidence="1">Belongs to the CTP synthase family.</text>
</comment>
<organism>
    <name type="scientific">Borreliella afzelii (strain PKo)</name>
    <name type="common">Borrelia afzelii</name>
    <dbReference type="NCBI Taxonomy" id="390236"/>
    <lineage>
        <taxon>Bacteria</taxon>
        <taxon>Pseudomonadati</taxon>
        <taxon>Spirochaetota</taxon>
        <taxon>Spirochaetia</taxon>
        <taxon>Spirochaetales</taxon>
        <taxon>Borreliaceae</taxon>
        <taxon>Borreliella</taxon>
    </lineage>
</organism>
<feature type="chain" id="PRO_0000266076" description="CTP synthase">
    <location>
        <begin position="1"/>
        <end position="533"/>
    </location>
</feature>
<feature type="domain" description="Glutamine amidotransferase type-1" evidence="1">
    <location>
        <begin position="304"/>
        <end position="533"/>
    </location>
</feature>
<feature type="region of interest" description="Amidoligase domain" evidence="1">
    <location>
        <begin position="1"/>
        <end position="269"/>
    </location>
</feature>
<feature type="active site" description="Nucleophile; for glutamine hydrolysis" evidence="1">
    <location>
        <position position="382"/>
    </location>
</feature>
<feature type="active site" evidence="1">
    <location>
        <position position="511"/>
    </location>
</feature>
<feature type="active site" evidence="1">
    <location>
        <position position="513"/>
    </location>
</feature>
<feature type="binding site" evidence="1">
    <location>
        <position position="16"/>
    </location>
    <ligand>
        <name>CTP</name>
        <dbReference type="ChEBI" id="CHEBI:37563"/>
        <note>allosteric inhibitor</note>
    </ligand>
</feature>
<feature type="binding site" evidence="1">
    <location>
        <position position="16"/>
    </location>
    <ligand>
        <name>UTP</name>
        <dbReference type="ChEBI" id="CHEBI:46398"/>
    </ligand>
</feature>
<feature type="binding site" evidence="1">
    <location>
        <begin position="17"/>
        <end position="22"/>
    </location>
    <ligand>
        <name>ATP</name>
        <dbReference type="ChEBI" id="CHEBI:30616"/>
    </ligand>
</feature>
<feature type="binding site" evidence="1">
    <location>
        <position position="73"/>
    </location>
    <ligand>
        <name>ATP</name>
        <dbReference type="ChEBI" id="CHEBI:30616"/>
    </ligand>
</feature>
<feature type="binding site" evidence="1">
    <location>
        <position position="73"/>
    </location>
    <ligand>
        <name>Mg(2+)</name>
        <dbReference type="ChEBI" id="CHEBI:18420"/>
    </ligand>
</feature>
<feature type="binding site" evidence="1">
    <location>
        <position position="143"/>
    </location>
    <ligand>
        <name>Mg(2+)</name>
        <dbReference type="ChEBI" id="CHEBI:18420"/>
    </ligand>
</feature>
<feature type="binding site" evidence="1">
    <location>
        <begin position="150"/>
        <end position="152"/>
    </location>
    <ligand>
        <name>CTP</name>
        <dbReference type="ChEBI" id="CHEBI:37563"/>
        <note>allosteric inhibitor</note>
    </ligand>
</feature>
<feature type="binding site" evidence="1">
    <location>
        <begin position="190"/>
        <end position="195"/>
    </location>
    <ligand>
        <name>CTP</name>
        <dbReference type="ChEBI" id="CHEBI:37563"/>
        <note>allosteric inhibitor</note>
    </ligand>
</feature>
<feature type="binding site" evidence="1">
    <location>
        <begin position="190"/>
        <end position="195"/>
    </location>
    <ligand>
        <name>UTP</name>
        <dbReference type="ChEBI" id="CHEBI:46398"/>
    </ligand>
</feature>
<feature type="binding site" evidence="1">
    <location>
        <position position="226"/>
    </location>
    <ligand>
        <name>CTP</name>
        <dbReference type="ChEBI" id="CHEBI:37563"/>
        <note>allosteric inhibitor</note>
    </ligand>
</feature>
<feature type="binding site" evidence="1">
    <location>
        <position position="226"/>
    </location>
    <ligand>
        <name>UTP</name>
        <dbReference type="ChEBI" id="CHEBI:46398"/>
    </ligand>
</feature>
<feature type="binding site" evidence="1">
    <location>
        <position position="355"/>
    </location>
    <ligand>
        <name>L-glutamine</name>
        <dbReference type="ChEBI" id="CHEBI:58359"/>
    </ligand>
</feature>
<feature type="binding site" evidence="1">
    <location>
        <begin position="383"/>
        <end position="386"/>
    </location>
    <ligand>
        <name>L-glutamine</name>
        <dbReference type="ChEBI" id="CHEBI:58359"/>
    </ligand>
</feature>
<feature type="binding site" evidence="1">
    <location>
        <position position="406"/>
    </location>
    <ligand>
        <name>L-glutamine</name>
        <dbReference type="ChEBI" id="CHEBI:58359"/>
    </ligand>
</feature>
<feature type="binding site" evidence="1">
    <location>
        <position position="466"/>
    </location>
    <ligand>
        <name>L-glutamine</name>
        <dbReference type="ChEBI" id="CHEBI:58359"/>
    </ligand>
</feature>
<name>PYRG_BORAP</name>
<reference key="1">
    <citation type="journal article" date="2006" name="BMC Genomics">
        <title>Comparative genome analysis: selection pressure on the Borrelia vls cassettes is essential for infectivity.</title>
        <authorList>
            <person name="Gloeckner G."/>
            <person name="Schulte-Spechtel U."/>
            <person name="Schilhabel M."/>
            <person name="Felder M."/>
            <person name="Suehnel J."/>
            <person name="Wilske B."/>
            <person name="Platzer M."/>
        </authorList>
    </citation>
    <scope>NUCLEOTIDE SEQUENCE [LARGE SCALE GENOMIC DNA]</scope>
    <source>
        <strain>PKo</strain>
    </source>
</reference>
<reference key="2">
    <citation type="journal article" date="2011" name="J. Bacteriol.">
        <title>Whole-genome sequences of two Borrelia afzelii and two Borrelia garinii Lyme disease agent isolates.</title>
        <authorList>
            <person name="Casjens S.R."/>
            <person name="Mongodin E.F."/>
            <person name="Qiu W.G."/>
            <person name="Dunn J.J."/>
            <person name="Luft B.J."/>
            <person name="Fraser-Liggett C.M."/>
            <person name="Schutzer S.E."/>
        </authorList>
    </citation>
    <scope>NUCLEOTIDE SEQUENCE [LARGE SCALE GENOMIC DNA]</scope>
    <source>
        <strain>PKo</strain>
    </source>
</reference>
<dbReference type="EC" id="6.3.4.2" evidence="1"/>
<dbReference type="EMBL" id="CP000395">
    <property type="protein sequence ID" value="ABH01845.1"/>
    <property type="molecule type" value="Genomic_DNA"/>
</dbReference>
<dbReference type="EMBL" id="CP002933">
    <property type="protein sequence ID" value="AEL69795.1"/>
    <property type="molecule type" value="Genomic_DNA"/>
</dbReference>
<dbReference type="RefSeq" id="WP_004789684.1">
    <property type="nucleotide sequence ID" value="NZ_CP160066.1"/>
</dbReference>
<dbReference type="SMR" id="Q0SMT3"/>
<dbReference type="STRING" id="29518.BLA32_01390"/>
<dbReference type="MEROPS" id="C26.964"/>
<dbReference type="GeneID" id="77265421"/>
<dbReference type="KEGG" id="baf:BAPKO_0606"/>
<dbReference type="KEGG" id="bafz:BafPKo_0591"/>
<dbReference type="PATRIC" id="fig|390236.22.peg.568"/>
<dbReference type="eggNOG" id="COG0504">
    <property type="taxonomic scope" value="Bacteria"/>
</dbReference>
<dbReference type="HOGENOM" id="CLU_011675_5_0_12"/>
<dbReference type="OrthoDB" id="9801107at2"/>
<dbReference type="UniPathway" id="UPA00159">
    <property type="reaction ID" value="UER00277"/>
</dbReference>
<dbReference type="Proteomes" id="UP000005216">
    <property type="component" value="Chromosome"/>
</dbReference>
<dbReference type="GO" id="GO:0005524">
    <property type="term" value="F:ATP binding"/>
    <property type="evidence" value="ECO:0007669"/>
    <property type="project" value="UniProtKB-KW"/>
</dbReference>
<dbReference type="GO" id="GO:0003883">
    <property type="term" value="F:CTP synthase activity"/>
    <property type="evidence" value="ECO:0007669"/>
    <property type="project" value="UniProtKB-UniRule"/>
</dbReference>
<dbReference type="GO" id="GO:0004359">
    <property type="term" value="F:glutaminase activity"/>
    <property type="evidence" value="ECO:0007669"/>
    <property type="project" value="RHEA"/>
</dbReference>
<dbReference type="GO" id="GO:0042802">
    <property type="term" value="F:identical protein binding"/>
    <property type="evidence" value="ECO:0007669"/>
    <property type="project" value="TreeGrafter"/>
</dbReference>
<dbReference type="GO" id="GO:0046872">
    <property type="term" value="F:metal ion binding"/>
    <property type="evidence" value="ECO:0007669"/>
    <property type="project" value="UniProtKB-KW"/>
</dbReference>
<dbReference type="GO" id="GO:0044210">
    <property type="term" value="P:'de novo' CTP biosynthetic process"/>
    <property type="evidence" value="ECO:0007669"/>
    <property type="project" value="UniProtKB-UniRule"/>
</dbReference>
<dbReference type="GO" id="GO:0019856">
    <property type="term" value="P:pyrimidine nucleobase biosynthetic process"/>
    <property type="evidence" value="ECO:0007669"/>
    <property type="project" value="TreeGrafter"/>
</dbReference>
<dbReference type="CDD" id="cd03113">
    <property type="entry name" value="CTPS_N"/>
    <property type="match status" value="1"/>
</dbReference>
<dbReference type="CDD" id="cd01746">
    <property type="entry name" value="GATase1_CTP_Synthase"/>
    <property type="match status" value="1"/>
</dbReference>
<dbReference type="FunFam" id="3.40.50.300:FF:000009">
    <property type="entry name" value="CTP synthase"/>
    <property type="match status" value="1"/>
</dbReference>
<dbReference type="FunFam" id="3.40.50.880:FF:000002">
    <property type="entry name" value="CTP synthase"/>
    <property type="match status" value="1"/>
</dbReference>
<dbReference type="Gene3D" id="3.40.50.880">
    <property type="match status" value="1"/>
</dbReference>
<dbReference type="Gene3D" id="3.40.50.300">
    <property type="entry name" value="P-loop containing nucleotide triphosphate hydrolases"/>
    <property type="match status" value="1"/>
</dbReference>
<dbReference type="HAMAP" id="MF_01227">
    <property type="entry name" value="PyrG"/>
    <property type="match status" value="1"/>
</dbReference>
<dbReference type="InterPro" id="IPR029062">
    <property type="entry name" value="Class_I_gatase-like"/>
</dbReference>
<dbReference type="InterPro" id="IPR004468">
    <property type="entry name" value="CTP_synthase"/>
</dbReference>
<dbReference type="InterPro" id="IPR017456">
    <property type="entry name" value="CTP_synthase_N"/>
</dbReference>
<dbReference type="InterPro" id="IPR017926">
    <property type="entry name" value="GATASE"/>
</dbReference>
<dbReference type="InterPro" id="IPR033828">
    <property type="entry name" value="GATase1_CTP_Synthase"/>
</dbReference>
<dbReference type="InterPro" id="IPR027417">
    <property type="entry name" value="P-loop_NTPase"/>
</dbReference>
<dbReference type="NCBIfam" id="NF003792">
    <property type="entry name" value="PRK05380.1"/>
    <property type="match status" value="1"/>
</dbReference>
<dbReference type="NCBIfam" id="TIGR00337">
    <property type="entry name" value="PyrG"/>
    <property type="match status" value="1"/>
</dbReference>
<dbReference type="PANTHER" id="PTHR11550">
    <property type="entry name" value="CTP SYNTHASE"/>
    <property type="match status" value="1"/>
</dbReference>
<dbReference type="PANTHER" id="PTHR11550:SF0">
    <property type="entry name" value="CTP SYNTHASE-RELATED"/>
    <property type="match status" value="1"/>
</dbReference>
<dbReference type="Pfam" id="PF06418">
    <property type="entry name" value="CTP_synth_N"/>
    <property type="match status" value="1"/>
</dbReference>
<dbReference type="Pfam" id="PF00117">
    <property type="entry name" value="GATase"/>
    <property type="match status" value="1"/>
</dbReference>
<dbReference type="SUPFAM" id="SSF52317">
    <property type="entry name" value="Class I glutamine amidotransferase-like"/>
    <property type="match status" value="1"/>
</dbReference>
<dbReference type="SUPFAM" id="SSF52540">
    <property type="entry name" value="P-loop containing nucleoside triphosphate hydrolases"/>
    <property type="match status" value="1"/>
</dbReference>
<dbReference type="PROSITE" id="PS51273">
    <property type="entry name" value="GATASE_TYPE_1"/>
    <property type="match status" value="1"/>
</dbReference>
<gene>
    <name evidence="1" type="primary">pyrG</name>
    <name type="ordered locus">BAPKO_0606</name>
    <name type="ordered locus">BafPKo_0591</name>
</gene>